<accession>A8F9Z9</accession>
<sequence>MKALHFGAGNIGRGFIGSLLKTSGFELVFTDVNEAVINELNARGEYTVELAAPGQKQEIVGPVTAINSAQDPAALTEAVASADLITTAVGPAVLKIIASSIAEGLKQKNPDHIINIVACENMIGGSSHLKEAVFSHLTEEEQKALSQTVGFPNAAVDRIVPIQHHEDILKVSVEPFFEWVIDETGFIGDVPQIDGATFVQDLTPYIERKLFTVNTGHALAAYVGYQQGVQTIKEAVDTPEIRQVVEGALHETGSYLIDTYGFKKEEHDAYIQKIIKRFENVFISDEVTRVARSPLRKLGADDRLIGPAKKMKQPVYLIKGIAAALAYDFAEDEEAVRLQKLRKEKGIEGVLEEVCGLTPTDDLYQAILKETTR</sequence>
<gene>
    <name evidence="1" type="primary">mtlD</name>
    <name type="ordered locus">BPUM_0371</name>
</gene>
<name>MTLD_BACP2</name>
<comment type="catalytic activity">
    <reaction evidence="1">
        <text>D-mannitol 1-phosphate + NAD(+) = beta-D-fructose 6-phosphate + NADH + H(+)</text>
        <dbReference type="Rhea" id="RHEA:19661"/>
        <dbReference type="ChEBI" id="CHEBI:15378"/>
        <dbReference type="ChEBI" id="CHEBI:57540"/>
        <dbReference type="ChEBI" id="CHEBI:57634"/>
        <dbReference type="ChEBI" id="CHEBI:57945"/>
        <dbReference type="ChEBI" id="CHEBI:61381"/>
        <dbReference type="EC" id="1.1.1.17"/>
    </reaction>
</comment>
<comment type="similarity">
    <text evidence="1">Belongs to the mannitol dehydrogenase family.</text>
</comment>
<protein>
    <recommendedName>
        <fullName evidence="1">Mannitol-1-phosphate 5-dehydrogenase</fullName>
        <ecNumber evidence="1">1.1.1.17</ecNumber>
    </recommendedName>
</protein>
<feature type="chain" id="PRO_1000058530" description="Mannitol-1-phosphate 5-dehydrogenase">
    <location>
        <begin position="1"/>
        <end position="373"/>
    </location>
</feature>
<feature type="binding site" evidence="1">
    <location>
        <begin position="3"/>
        <end position="14"/>
    </location>
    <ligand>
        <name>NAD(+)</name>
        <dbReference type="ChEBI" id="CHEBI:57540"/>
    </ligand>
</feature>
<keyword id="KW-0520">NAD</keyword>
<keyword id="KW-0560">Oxidoreductase</keyword>
<dbReference type="EC" id="1.1.1.17" evidence="1"/>
<dbReference type="EMBL" id="CP000813">
    <property type="protein sequence ID" value="ABV61066.1"/>
    <property type="molecule type" value="Genomic_DNA"/>
</dbReference>
<dbReference type="RefSeq" id="WP_012008934.1">
    <property type="nucleotide sequence ID" value="NZ_VEIS01000004.1"/>
</dbReference>
<dbReference type="SMR" id="A8F9Z9"/>
<dbReference type="STRING" id="315750.BPUM_0371"/>
<dbReference type="GeneID" id="5619623"/>
<dbReference type="KEGG" id="bpu:BPUM_0371"/>
<dbReference type="eggNOG" id="COG0246">
    <property type="taxonomic scope" value="Bacteria"/>
</dbReference>
<dbReference type="HOGENOM" id="CLU_036089_2_0_9"/>
<dbReference type="OrthoDB" id="271711at2"/>
<dbReference type="Proteomes" id="UP000001355">
    <property type="component" value="Chromosome"/>
</dbReference>
<dbReference type="GO" id="GO:0005829">
    <property type="term" value="C:cytosol"/>
    <property type="evidence" value="ECO:0007669"/>
    <property type="project" value="TreeGrafter"/>
</dbReference>
<dbReference type="GO" id="GO:0008926">
    <property type="term" value="F:mannitol-1-phosphate 5-dehydrogenase activity"/>
    <property type="evidence" value="ECO:0007669"/>
    <property type="project" value="UniProtKB-UniRule"/>
</dbReference>
<dbReference type="GO" id="GO:0019592">
    <property type="term" value="P:mannitol catabolic process"/>
    <property type="evidence" value="ECO:0007669"/>
    <property type="project" value="TreeGrafter"/>
</dbReference>
<dbReference type="Gene3D" id="1.10.1040.10">
    <property type="entry name" value="N-(1-d-carboxylethyl)-l-norvaline Dehydrogenase, domain 2"/>
    <property type="match status" value="1"/>
</dbReference>
<dbReference type="Gene3D" id="3.40.50.720">
    <property type="entry name" value="NAD(P)-binding Rossmann-like Domain"/>
    <property type="match status" value="1"/>
</dbReference>
<dbReference type="HAMAP" id="MF_00196">
    <property type="entry name" value="Mannitol_dehydrog"/>
    <property type="match status" value="1"/>
</dbReference>
<dbReference type="InterPro" id="IPR008927">
    <property type="entry name" value="6-PGluconate_DH-like_C_sf"/>
</dbReference>
<dbReference type="InterPro" id="IPR013328">
    <property type="entry name" value="6PGD_dom2"/>
</dbReference>
<dbReference type="InterPro" id="IPR023028">
    <property type="entry name" value="Mannitol_1_phos_5_DH"/>
</dbReference>
<dbReference type="InterPro" id="IPR000669">
    <property type="entry name" value="Mannitol_DH"/>
</dbReference>
<dbReference type="InterPro" id="IPR013118">
    <property type="entry name" value="Mannitol_DH_C"/>
</dbReference>
<dbReference type="InterPro" id="IPR023027">
    <property type="entry name" value="Mannitol_DH_CS"/>
</dbReference>
<dbReference type="InterPro" id="IPR013131">
    <property type="entry name" value="Mannitol_DH_N"/>
</dbReference>
<dbReference type="InterPro" id="IPR036291">
    <property type="entry name" value="NAD(P)-bd_dom_sf"/>
</dbReference>
<dbReference type="NCBIfam" id="NF002646">
    <property type="entry name" value="PRK02318.1-2"/>
    <property type="match status" value="1"/>
</dbReference>
<dbReference type="NCBIfam" id="NF002647">
    <property type="entry name" value="PRK02318.1-3"/>
    <property type="match status" value="1"/>
</dbReference>
<dbReference type="NCBIfam" id="NF002649">
    <property type="entry name" value="PRK02318.2-1"/>
    <property type="match status" value="1"/>
</dbReference>
<dbReference type="NCBIfam" id="NF002652">
    <property type="entry name" value="PRK02318.2-5"/>
    <property type="match status" value="1"/>
</dbReference>
<dbReference type="PANTHER" id="PTHR30524:SF0">
    <property type="entry name" value="ALTRONATE OXIDOREDUCTASE-RELATED"/>
    <property type="match status" value="1"/>
</dbReference>
<dbReference type="PANTHER" id="PTHR30524">
    <property type="entry name" value="MANNITOL-1-PHOSPHATE 5-DEHYDROGENASE"/>
    <property type="match status" value="1"/>
</dbReference>
<dbReference type="Pfam" id="PF01232">
    <property type="entry name" value="Mannitol_dh"/>
    <property type="match status" value="1"/>
</dbReference>
<dbReference type="Pfam" id="PF08125">
    <property type="entry name" value="Mannitol_dh_C"/>
    <property type="match status" value="1"/>
</dbReference>
<dbReference type="PRINTS" id="PR00084">
    <property type="entry name" value="MTLDHDRGNASE"/>
</dbReference>
<dbReference type="SUPFAM" id="SSF48179">
    <property type="entry name" value="6-phosphogluconate dehydrogenase C-terminal domain-like"/>
    <property type="match status" value="1"/>
</dbReference>
<dbReference type="SUPFAM" id="SSF51735">
    <property type="entry name" value="NAD(P)-binding Rossmann-fold domains"/>
    <property type="match status" value="1"/>
</dbReference>
<dbReference type="PROSITE" id="PS00974">
    <property type="entry name" value="MANNITOL_DHGENASE"/>
    <property type="match status" value="1"/>
</dbReference>
<evidence type="ECO:0000255" key="1">
    <source>
        <dbReference type="HAMAP-Rule" id="MF_00196"/>
    </source>
</evidence>
<organism>
    <name type="scientific">Bacillus pumilus (strain SAFR-032)</name>
    <dbReference type="NCBI Taxonomy" id="315750"/>
    <lineage>
        <taxon>Bacteria</taxon>
        <taxon>Bacillati</taxon>
        <taxon>Bacillota</taxon>
        <taxon>Bacilli</taxon>
        <taxon>Bacillales</taxon>
        <taxon>Bacillaceae</taxon>
        <taxon>Bacillus</taxon>
    </lineage>
</organism>
<reference key="1">
    <citation type="journal article" date="2007" name="PLoS ONE">
        <title>Paradoxical DNA repair and peroxide resistance gene conservation in Bacillus pumilus SAFR-032.</title>
        <authorList>
            <person name="Gioia J."/>
            <person name="Yerrapragada S."/>
            <person name="Qin X."/>
            <person name="Jiang H."/>
            <person name="Igboeli O.C."/>
            <person name="Muzny D."/>
            <person name="Dugan-Rocha S."/>
            <person name="Ding Y."/>
            <person name="Hawes A."/>
            <person name="Liu W."/>
            <person name="Perez L."/>
            <person name="Kovar C."/>
            <person name="Dinh H."/>
            <person name="Lee S."/>
            <person name="Nazareth L."/>
            <person name="Blyth P."/>
            <person name="Holder M."/>
            <person name="Buhay C."/>
            <person name="Tirumalai M.R."/>
            <person name="Liu Y."/>
            <person name="Dasgupta I."/>
            <person name="Bokhetache L."/>
            <person name="Fujita M."/>
            <person name="Karouia F."/>
            <person name="Eswara Moorthy P."/>
            <person name="Siefert J."/>
            <person name="Uzman A."/>
            <person name="Buzumbo P."/>
            <person name="Verma A."/>
            <person name="Zwiya H."/>
            <person name="McWilliams B.D."/>
            <person name="Olowu A."/>
            <person name="Clinkenbeard K.D."/>
            <person name="Newcombe D."/>
            <person name="Golebiewski L."/>
            <person name="Petrosino J.F."/>
            <person name="Nicholson W.L."/>
            <person name="Fox G.E."/>
            <person name="Venkateswaran K."/>
            <person name="Highlander S.K."/>
            <person name="Weinstock G.M."/>
        </authorList>
    </citation>
    <scope>NUCLEOTIDE SEQUENCE [LARGE SCALE GENOMIC DNA]</scope>
    <source>
        <strain>SAFR-032</strain>
    </source>
</reference>
<proteinExistence type="inferred from homology"/>